<feature type="initiator methionine" description="Removed; by host" evidence="1">
    <location>
        <position position="1"/>
    </location>
</feature>
<feature type="chain" id="PRO_0000083190" description="Capsid protein">
    <location>
        <begin position="2"/>
        <end position="221"/>
    </location>
</feature>
<feature type="region of interest" description="Disordered" evidence="2">
    <location>
        <begin position="1"/>
        <end position="24"/>
    </location>
</feature>
<feature type="modified residue" description="N-acetylserine; by host" evidence="1">
    <location>
        <position position="2"/>
    </location>
</feature>
<feature type="strand" evidence="6">
    <location>
        <begin position="53"/>
        <end position="57"/>
    </location>
</feature>
<feature type="strand" evidence="6">
    <location>
        <begin position="62"/>
        <end position="64"/>
    </location>
</feature>
<feature type="turn" evidence="6">
    <location>
        <begin position="67"/>
        <end position="69"/>
    </location>
</feature>
<feature type="strand" evidence="6">
    <location>
        <begin position="70"/>
        <end position="74"/>
    </location>
</feature>
<feature type="helix" evidence="6">
    <location>
        <begin position="75"/>
        <end position="79"/>
    </location>
</feature>
<feature type="strand" evidence="6">
    <location>
        <begin position="95"/>
        <end position="104"/>
    </location>
</feature>
<feature type="strand" evidence="6">
    <location>
        <begin position="106"/>
        <end position="112"/>
    </location>
</feature>
<feature type="strand" evidence="6">
    <location>
        <begin position="117"/>
        <end position="120"/>
    </location>
</feature>
<feature type="strand" evidence="6">
    <location>
        <begin position="129"/>
        <end position="131"/>
    </location>
</feature>
<feature type="strand" evidence="6">
    <location>
        <begin position="134"/>
        <end position="136"/>
    </location>
</feature>
<feature type="strand" evidence="6">
    <location>
        <begin position="145"/>
        <end position="147"/>
    </location>
</feature>
<feature type="strand" evidence="6">
    <location>
        <begin position="151"/>
        <end position="157"/>
    </location>
</feature>
<feature type="helix" evidence="6">
    <location>
        <begin position="158"/>
        <end position="162"/>
    </location>
</feature>
<feature type="strand" evidence="6">
    <location>
        <begin position="168"/>
        <end position="173"/>
    </location>
</feature>
<feature type="strand" evidence="6">
    <location>
        <begin position="185"/>
        <end position="195"/>
    </location>
</feature>
<feature type="helix" evidence="6">
    <location>
        <begin position="204"/>
        <end position="206"/>
    </location>
</feature>
<gene>
    <name type="ORF">ORF3b</name>
</gene>
<keyword id="KW-0002">3D-structure</keyword>
<keyword id="KW-0007">Acetylation</keyword>
<keyword id="KW-0167">Capsid protein</keyword>
<keyword id="KW-1185">Reference proteome</keyword>
<keyword id="KW-0687">Ribonucleoprotein</keyword>
<keyword id="KW-0694">RNA-binding</keyword>
<keyword id="KW-1142">T=3 icosahedral capsid protein</keyword>
<keyword id="KW-0543">Viral nucleoprotein</keyword>
<keyword id="KW-0946">Virion</keyword>
<organism>
    <name type="scientific">Alfalfa mosaic virus</name>
    <name type="common">AMV</name>
    <dbReference type="NCBI Taxonomy" id="12321"/>
    <lineage>
        <taxon>Viruses</taxon>
        <taxon>Riboviria</taxon>
        <taxon>Orthornavirae</taxon>
        <taxon>Kitrinoviricota</taxon>
        <taxon>Alsuviricetes</taxon>
        <taxon>Martellivirales</taxon>
        <taxon>Bromoviridae</taxon>
        <taxon>Alfamovirus</taxon>
    </lineage>
</organism>
<evidence type="ECO:0000250" key="1"/>
<evidence type="ECO:0000256" key="2">
    <source>
        <dbReference type="SAM" id="MobiDB-lite"/>
    </source>
</evidence>
<evidence type="ECO:0000269" key="3">
    <source>
    </source>
</evidence>
<evidence type="ECO:0000305" key="4"/>
<evidence type="ECO:0007744" key="5">
    <source>
        <dbReference type="PDB" id="7EPP"/>
    </source>
</evidence>
<evidence type="ECO:0007829" key="6">
    <source>
        <dbReference type="PDB" id="7EPP"/>
    </source>
</evidence>
<dbReference type="EMBL" id="K02703">
    <property type="protein sequence ID" value="AAA46292.1"/>
    <property type="molecule type" value="Genomic_RNA"/>
</dbReference>
<dbReference type="PIR" id="A93466">
    <property type="entry name" value="VCFM42"/>
</dbReference>
<dbReference type="RefSeq" id="NP_041195.1">
    <property type="nucleotide sequence ID" value="NC_002025.1"/>
</dbReference>
<dbReference type="PDB" id="7EPP">
    <property type="method" value="EM"/>
    <property type="resolution" value="2.40 A"/>
    <property type="chains" value="a=1-221"/>
</dbReference>
<dbReference type="PDBsum" id="7EPP"/>
<dbReference type="EMDB" id="EMD-31248"/>
<dbReference type="SMR" id="P05673"/>
<dbReference type="KEGG" id="vg:962670"/>
<dbReference type="Proteomes" id="UP000000358">
    <property type="component" value="Genome"/>
</dbReference>
<dbReference type="GO" id="GO:1990904">
    <property type="term" value="C:ribonucleoprotein complex"/>
    <property type="evidence" value="ECO:0007669"/>
    <property type="project" value="UniProtKB-KW"/>
</dbReference>
<dbReference type="GO" id="GO:0039617">
    <property type="term" value="C:T=3 icosahedral viral capsid"/>
    <property type="evidence" value="ECO:0007669"/>
    <property type="project" value="UniProtKB-KW"/>
</dbReference>
<dbReference type="GO" id="GO:0019013">
    <property type="term" value="C:viral nucleocapsid"/>
    <property type="evidence" value="ECO:0007669"/>
    <property type="project" value="UniProtKB-KW"/>
</dbReference>
<dbReference type="GO" id="GO:0003723">
    <property type="term" value="F:RNA binding"/>
    <property type="evidence" value="ECO:0007669"/>
    <property type="project" value="UniProtKB-KW"/>
</dbReference>
<dbReference type="InterPro" id="IPR002681">
    <property type="entry name" value="Coat_Ilarvirus"/>
</dbReference>
<dbReference type="Pfam" id="PF01787">
    <property type="entry name" value="Ilar_coat"/>
    <property type="match status" value="1"/>
</dbReference>
<comment type="function">
    <text evidence="1 3">Capsid protein (PubMed:33940388). Binds to the to the 3' end of the nonpolyadenylated viral RNA and is involved in viral RNA translation initiation. Probably binds RNA and plays a role in packaging (By similarity).</text>
</comment>
<comment type="subcellular location">
    <subcellularLocation>
        <location evidence="4">Virion</location>
    </subcellularLocation>
</comment>
<comment type="similarity">
    <text evidence="4">Belongs to the alphamovirus/ilarvirus capsid protein family.</text>
</comment>
<protein>
    <recommendedName>
        <fullName>Capsid protein</fullName>
        <shortName>CP</shortName>
    </recommendedName>
    <alternativeName>
        <fullName>Coat protein</fullName>
    </alternativeName>
</protein>
<accession>P05673</accession>
<reference key="1">
    <citation type="journal article" date="1983" name="Nucleic Acids Res.">
        <title>Complete nucleotide sequence of alfalfa mosaic virus RNA3.</title>
        <authorList>
            <person name="Barker R.F."/>
            <person name="Jarvis N.P."/>
            <person name="Thompson D.V."/>
            <person name="Loesch-Fries L.S."/>
            <person name="Hall T.C."/>
        </authorList>
    </citation>
    <scope>NUCLEOTIDE SEQUENCE [GENOMIC RNA]</scope>
    <source>
        <strain>425/Madison</strain>
    </source>
</reference>
<reference evidence="5" key="2">
    <citation type="journal article" date="2021" name="Biochem. Biophys. Res. Commun.">
        <title>Characterization of alfalfa mosaic virus capsid protein using Cryo-EM.</title>
        <authorList>
            <person name="Jeong H."/>
            <person name="Park Y."/>
            <person name="Song S."/>
            <person name="Min K."/>
            <person name="Woo J.S."/>
            <person name="Lee Y.H."/>
            <person name="Sohn E.J."/>
            <person name="Lee S."/>
        </authorList>
    </citation>
    <scope>STRUCTURE BY ELECTRON MICROSCOPY (2.40 ANGSTROMS) OF THE VIRAL CAPSID</scope>
    <scope>FUNCTION</scope>
</reference>
<sequence>MSSSQKKAGGKAGKPTKRSQNYAALRKAQLPKPPALKVPVVKPTNTILPQTGCVWQSLGTPLSLSSFNGLGVRFLYSFLKDFAGPRILEEDLIYRMVFSITPSYAGTFCLTDDVTTEDGRAVAHGNPMQEFPHGAFHANEKFGFELVFTAPTHAGMQNQNFKHSYAVALCLDFDAQPEGSKNPSYRFNEVWVERKAFPRAGPLRSLITVGLLDEADDLDRH</sequence>
<name>CAPSD_AMV</name>
<proteinExistence type="evidence at protein level"/>